<proteinExistence type="inferred from homology"/>
<comment type="function">
    <text evidence="1">ATP-binding (A) component of a common energy-coupling factor (ECF) ABC-transporter complex. Unlike classic ABC transporters this ECF transporter provides the energy necessary to transport a number of different substrates.</text>
</comment>
<comment type="subunit">
    <text evidence="1">Forms a stable energy-coupling factor (ECF) transporter complex composed of 2 membrane-embedded substrate-binding proteins (S component), 2 ATP-binding proteins (A component) and 2 transmembrane proteins (T component).</text>
</comment>
<comment type="subcellular location">
    <subcellularLocation>
        <location evidence="1">Cell membrane</location>
        <topology evidence="1">Peripheral membrane protein</topology>
    </subcellularLocation>
</comment>
<comment type="similarity">
    <text evidence="1">Belongs to the ABC transporter superfamily. Energy-coupling factor EcfA family.</text>
</comment>
<comment type="sequence caution" evidence="2">
    <conflict type="erroneous initiation">
        <sequence resource="EMBL-CDS" id="AAK34823"/>
    </conflict>
    <text>Extended N-terminus.</text>
</comment>
<comment type="sequence caution" evidence="2">
    <conflict type="erroneous initiation">
        <sequence resource="EMBL-CDS" id="AAZ52464"/>
    </conflict>
    <text>Extended N-terminus.</text>
</comment>
<keyword id="KW-0067">ATP-binding</keyword>
<keyword id="KW-1003">Cell membrane</keyword>
<keyword id="KW-0472">Membrane</keyword>
<keyword id="KW-0547">Nucleotide-binding</keyword>
<keyword id="KW-1185">Reference proteome</keyword>
<keyword id="KW-1278">Translocase</keyword>
<keyword id="KW-0813">Transport</keyword>
<evidence type="ECO:0000255" key="1">
    <source>
        <dbReference type="HAMAP-Rule" id="MF_01710"/>
    </source>
</evidence>
<evidence type="ECO:0000305" key="2"/>
<name>ECFA1_STRP1</name>
<dbReference type="EC" id="7.-.-.-" evidence="1"/>
<dbReference type="EMBL" id="AE004092">
    <property type="protein sequence ID" value="AAK34823.1"/>
    <property type="status" value="ALT_INIT"/>
    <property type="molecule type" value="Genomic_DNA"/>
</dbReference>
<dbReference type="EMBL" id="CP000017">
    <property type="protein sequence ID" value="AAZ52464.1"/>
    <property type="status" value="ALT_INIT"/>
    <property type="molecule type" value="Genomic_DNA"/>
</dbReference>
<dbReference type="RefSeq" id="NP_270102.1">
    <property type="nucleotide sequence ID" value="NC_002737.2"/>
</dbReference>
<dbReference type="SMR" id="P0C0E8"/>
<dbReference type="PaxDb" id="1314-HKU360_01956"/>
<dbReference type="KEGG" id="spy:SPy_2195"/>
<dbReference type="KEGG" id="spz:M5005_Spy1846"/>
<dbReference type="PATRIC" id="fig|160490.10.peg.1900"/>
<dbReference type="HOGENOM" id="CLU_000604_1_22_9"/>
<dbReference type="OMA" id="HPRDQFV"/>
<dbReference type="Proteomes" id="UP000000750">
    <property type="component" value="Chromosome"/>
</dbReference>
<dbReference type="GO" id="GO:0043190">
    <property type="term" value="C:ATP-binding cassette (ABC) transporter complex"/>
    <property type="evidence" value="ECO:0007669"/>
    <property type="project" value="TreeGrafter"/>
</dbReference>
<dbReference type="GO" id="GO:0005524">
    <property type="term" value="F:ATP binding"/>
    <property type="evidence" value="ECO:0007669"/>
    <property type="project" value="UniProtKB-KW"/>
</dbReference>
<dbReference type="GO" id="GO:0016887">
    <property type="term" value="F:ATP hydrolysis activity"/>
    <property type="evidence" value="ECO:0007669"/>
    <property type="project" value="InterPro"/>
</dbReference>
<dbReference type="GO" id="GO:0042626">
    <property type="term" value="F:ATPase-coupled transmembrane transporter activity"/>
    <property type="evidence" value="ECO:0007669"/>
    <property type="project" value="TreeGrafter"/>
</dbReference>
<dbReference type="CDD" id="cd03225">
    <property type="entry name" value="ABC_cobalt_CbiO_domain1"/>
    <property type="match status" value="1"/>
</dbReference>
<dbReference type="FunFam" id="3.40.50.300:FF:000224">
    <property type="entry name" value="Energy-coupling factor transporter ATP-binding protein EcfA"/>
    <property type="match status" value="1"/>
</dbReference>
<dbReference type="Gene3D" id="3.40.50.300">
    <property type="entry name" value="P-loop containing nucleotide triphosphate hydrolases"/>
    <property type="match status" value="1"/>
</dbReference>
<dbReference type="InterPro" id="IPR003593">
    <property type="entry name" value="AAA+_ATPase"/>
</dbReference>
<dbReference type="InterPro" id="IPR003439">
    <property type="entry name" value="ABC_transporter-like_ATP-bd"/>
</dbReference>
<dbReference type="InterPro" id="IPR017871">
    <property type="entry name" value="ABC_transporter-like_CS"/>
</dbReference>
<dbReference type="InterPro" id="IPR015856">
    <property type="entry name" value="ABC_transpr_CbiO/EcfA_su"/>
</dbReference>
<dbReference type="InterPro" id="IPR050095">
    <property type="entry name" value="ECF_ABC_transporter_ATP-bd"/>
</dbReference>
<dbReference type="InterPro" id="IPR030947">
    <property type="entry name" value="EcfA_1"/>
</dbReference>
<dbReference type="InterPro" id="IPR027417">
    <property type="entry name" value="P-loop_NTPase"/>
</dbReference>
<dbReference type="NCBIfam" id="TIGR04520">
    <property type="entry name" value="ECF_ATPase_1"/>
    <property type="match status" value="1"/>
</dbReference>
<dbReference type="NCBIfam" id="NF010156">
    <property type="entry name" value="PRK13635.1"/>
    <property type="match status" value="1"/>
</dbReference>
<dbReference type="NCBIfam" id="NF010167">
    <property type="entry name" value="PRK13648.1"/>
    <property type="match status" value="1"/>
</dbReference>
<dbReference type="PANTHER" id="PTHR43553:SF24">
    <property type="entry name" value="ENERGY-COUPLING FACTOR TRANSPORTER ATP-BINDING PROTEIN ECFA1"/>
    <property type="match status" value="1"/>
</dbReference>
<dbReference type="PANTHER" id="PTHR43553">
    <property type="entry name" value="HEAVY METAL TRANSPORTER"/>
    <property type="match status" value="1"/>
</dbReference>
<dbReference type="Pfam" id="PF00005">
    <property type="entry name" value="ABC_tran"/>
    <property type="match status" value="1"/>
</dbReference>
<dbReference type="SMART" id="SM00382">
    <property type="entry name" value="AAA"/>
    <property type="match status" value="1"/>
</dbReference>
<dbReference type="SUPFAM" id="SSF52540">
    <property type="entry name" value="P-loop containing nucleoside triphosphate hydrolases"/>
    <property type="match status" value="1"/>
</dbReference>
<dbReference type="PROSITE" id="PS00211">
    <property type="entry name" value="ABC_TRANSPORTER_1"/>
    <property type="match status" value="1"/>
</dbReference>
<dbReference type="PROSITE" id="PS50893">
    <property type="entry name" value="ABC_TRANSPORTER_2"/>
    <property type="match status" value="1"/>
</dbReference>
<dbReference type="PROSITE" id="PS51246">
    <property type="entry name" value="CBIO"/>
    <property type="match status" value="1"/>
</dbReference>
<feature type="chain" id="PRO_0000092106" description="Energy-coupling factor transporter ATP-binding protein EcfA1">
    <location>
        <begin position="1"/>
        <end position="279"/>
    </location>
</feature>
<feature type="domain" description="ABC transporter" evidence="1">
    <location>
        <begin position="5"/>
        <end position="240"/>
    </location>
</feature>
<feature type="binding site" evidence="1">
    <location>
        <begin position="40"/>
        <end position="47"/>
    </location>
    <ligand>
        <name>ATP</name>
        <dbReference type="ChEBI" id="CHEBI:30616"/>
    </ligand>
</feature>
<accession>P0C0E8</accession>
<accession>O87533</accession>
<accession>Q48W11</accession>
<accession>Q99XI1</accession>
<organism>
    <name type="scientific">Streptococcus pyogenes serotype M1</name>
    <dbReference type="NCBI Taxonomy" id="301447"/>
    <lineage>
        <taxon>Bacteria</taxon>
        <taxon>Bacillati</taxon>
        <taxon>Bacillota</taxon>
        <taxon>Bacilli</taxon>
        <taxon>Lactobacillales</taxon>
        <taxon>Streptococcaceae</taxon>
        <taxon>Streptococcus</taxon>
    </lineage>
</organism>
<gene>
    <name evidence="1" type="primary">ecfA1</name>
    <name type="synonym">cbiO1</name>
    <name type="ordered locus">SPy_2195</name>
    <name type="ordered locus">M5005_Spy1846</name>
</gene>
<protein>
    <recommendedName>
        <fullName evidence="1">Energy-coupling factor transporter ATP-binding protein EcfA1</fullName>
        <shortName evidence="1">ECF transporter A component EcfA1</shortName>
        <ecNumber evidence="1">7.-.-.-</ecNumber>
    </recommendedName>
</protein>
<reference key="1">
    <citation type="journal article" date="2001" name="Proc. Natl. Acad. Sci. U.S.A.">
        <title>Complete genome sequence of an M1 strain of Streptococcus pyogenes.</title>
        <authorList>
            <person name="Ferretti J.J."/>
            <person name="McShan W.M."/>
            <person name="Ajdic D.J."/>
            <person name="Savic D.J."/>
            <person name="Savic G."/>
            <person name="Lyon K."/>
            <person name="Primeaux C."/>
            <person name="Sezate S."/>
            <person name="Suvorov A.N."/>
            <person name="Kenton S."/>
            <person name="Lai H.S."/>
            <person name="Lin S.P."/>
            <person name="Qian Y."/>
            <person name="Jia H.G."/>
            <person name="Najar F.Z."/>
            <person name="Ren Q."/>
            <person name="Zhu H."/>
            <person name="Song L."/>
            <person name="White J."/>
            <person name="Yuan X."/>
            <person name="Clifton S.W."/>
            <person name="Roe B.A."/>
            <person name="McLaughlin R.E."/>
        </authorList>
    </citation>
    <scope>NUCLEOTIDE SEQUENCE [LARGE SCALE GENOMIC DNA]</scope>
    <source>
        <strain>ATCC 700294 / SF370 / Serotype M1</strain>
    </source>
</reference>
<reference key="2">
    <citation type="journal article" date="2005" name="J. Infect. Dis.">
        <title>Evolutionary origin and emergence of a highly successful clone of serotype M1 group A Streptococcus involved multiple horizontal gene transfer events.</title>
        <authorList>
            <person name="Sumby P."/>
            <person name="Porcella S.F."/>
            <person name="Madrigal A.G."/>
            <person name="Barbian K.D."/>
            <person name="Virtaneva K."/>
            <person name="Ricklefs S.M."/>
            <person name="Sturdevant D.E."/>
            <person name="Graham M.R."/>
            <person name="Vuopio-Varkila J."/>
            <person name="Hoe N.P."/>
            <person name="Musser J.M."/>
        </authorList>
    </citation>
    <scope>NUCLEOTIDE SEQUENCE [LARGE SCALE GENOMIC DNA]</scope>
    <source>
        <strain>ATCC BAA-947 / MGAS5005 / Serotype M1</strain>
    </source>
</reference>
<sequence>MSAIIELKKVTFNYHKDQEKPTLDGVSFHVKQGEWLSIIGHNGSGKSTTIRLIDGLLEPESGSIIVDGDLLTITNVWEIRHKIGMVFQNPDNQFVGATVEDDVAFGLENKGIAHEDIKERVNHALELVGMQNFKEKEPARLSGGQKQRVAIAGAVAMKPKIIILDEATSMLDPKGRLELIKTIKNIRDDYQLTVISITHDLDEVALSDRVLVMKDGQVESTSTPEQLFARGDELLQLGLDIPFTTSVVQMLQEEGYPVDYGYLTEKELENQLCQLISKM</sequence>